<sequence>MTNETIDQQPQTEAAFNPQQFINNLQVAFLKVDNAVASYDPDQKPIVDKNDRDNRQAFEGISQLREEYSNKAIKNPTKKNQYFSDFINKSNDLINKDNLIVVESSTKSFQKFGDQRYRIFTSWVSHQNDPSKINTRCIRNFMEHTIQPPIPDDKEKAEFLKSAKQSFAGIIIGNQIRTDQKFMGVFDESLKERQEAEKNGGPTGGDWLDIFLSFIFDKKQSSDVKEAINQEPLPHVQPDIATSTTHIQGLPPESRDLLDERGNFSKFTLGDMEMLDVEGVADMDPNYKFNQLLIHNNTLSSVLMGSHDGIEPEKVSLLYAGNGGFGAKHDWNATVGYKDQQGNNVATIINVHMKNGSGLVIAGGEKGINNPSFYLYKEDQLTGSQRALSQEEIQNKIDFMEFLAQNNAKLDSLSEKEKEKFRNEIKDFQKDSKPYLDALGNDRIAFVSKKDPKHSALITEFNKGDLSYTLKVMGKKQIKALDREKNVTLQGNLKHDGVMFVNYSNFKYTNASKSPNKGVGVTNGVSHLEAGFSKVAVFNLPNLNNLAITSVVRRDLEDKLIAKGLSPQEANKLVKDFLSSNKELVGKALNFNKAVAEAKNTGNYDEVKRAQKDLEKSLKKREHLEKGDVAKNLESKSGNKNKMEAKAQANSQKDEIFALINKEANRDARAIAYAQNLKGIKRELSDKLENINKDLKDFSKSFDGFKNGKNKDFSKAEETLKALKGSVKDLGINPEWISKVENLNAALNEFKNGKNKDFSKVTQAKSDQENSIKDVIINQKITDKVDELNQAVSVAKIACDFSGVEQALADLKNFSKEQLAQQAQKNESFNVGKSEIYQSVKNGVNGTLVGNGLSGIEATALAKNFSDIKKELNEKFKNFNNNNNNGLKNGGEPIYAQVNKKKTGQVASPEEPIYAQVAKKVTKKIDQLNQAATSGFGGVGQAGFPLKRHDKVEDLSKVGRSVSPEPIYATIDDLGGSFPLKRHDKVDDLSKVGLSRNQELTQKIDNLSQAVSEAKAGFFGNLEQTIDKLKDFTKNNPVNLWAESAKKVPASLSAKLDNYATNSHTRINSNIQNGAINEKATGTERQKNPEWLKLVNDKIVAHNVGSVPLSEYDNIGFSQKNMKDYSDSFKFSTKLNNAVKDIKSGFTQFLANAFSTGYYSMARENAEHGIKNANTKGGFQKS</sequence>
<accession>P55746</accession>
<comment type="function">
    <text>May be necessary for the transcription, folding, export, or function of the cytotoxin.</text>
</comment>
<dbReference type="EMBL" id="L11714">
    <property type="status" value="NOT_ANNOTATED_CDS"/>
    <property type="molecule type" value="Genomic_DNA"/>
</dbReference>
<dbReference type="SMR" id="P55746"/>
<dbReference type="GO" id="GO:0019534">
    <property type="term" value="F:toxin transmembrane transporter activity"/>
    <property type="evidence" value="ECO:0007669"/>
    <property type="project" value="InterPro"/>
</dbReference>
<dbReference type="Gene3D" id="1.10.357.130">
    <property type="match status" value="1"/>
</dbReference>
<dbReference type="Gene3D" id="1.20.120.1270">
    <property type="entry name" value="CagA exotoxin domain III"/>
    <property type="match status" value="4"/>
</dbReference>
<dbReference type="InterPro" id="IPR005169">
    <property type="entry name" value="CagA_C"/>
</dbReference>
<dbReference type="InterPro" id="IPR045157">
    <property type="entry name" value="CagA_N"/>
</dbReference>
<dbReference type="InterPro" id="IPR004355">
    <property type="entry name" value="IVSec_CagA"/>
</dbReference>
<dbReference type="NCBIfam" id="NF033422">
    <property type="entry name" value="onco_T4SS_CagA"/>
    <property type="match status" value="1"/>
</dbReference>
<dbReference type="Pfam" id="PF03507">
    <property type="entry name" value="CagA"/>
    <property type="match status" value="2"/>
</dbReference>
<dbReference type="Pfam" id="PF18971">
    <property type="entry name" value="CagA_N"/>
    <property type="match status" value="1"/>
</dbReference>
<dbReference type="PRINTS" id="PR01553">
    <property type="entry name" value="TYPE4SSCAGA"/>
</dbReference>
<name>CGA2_HELPX</name>
<organism>
    <name type="scientific">Helicobacter pylori</name>
    <name type="common">Campylobacter pylori</name>
    <dbReference type="NCBI Taxonomy" id="210"/>
    <lineage>
        <taxon>Bacteria</taxon>
        <taxon>Pseudomonadati</taxon>
        <taxon>Campylobacterota</taxon>
        <taxon>Epsilonproteobacteria</taxon>
        <taxon>Campylobacterales</taxon>
        <taxon>Helicobacteraceae</taxon>
        <taxon>Helicobacter</taxon>
    </lineage>
</organism>
<proteinExistence type="predicted"/>
<feature type="chain" id="PRO_0000089594" description="Cytotoxicity-associated immunodominant antigen">
    <location>
        <begin position="1"/>
        <end position="1182"/>
    </location>
</feature>
<protein>
    <recommendedName>
        <fullName>Cytotoxicity-associated immunodominant antigen</fullName>
    </recommendedName>
    <alternativeName>
        <fullName>120 kDa protein</fullName>
    </alternativeName>
</protein>
<gene>
    <name type="primary">cagA</name>
    <name type="synonym">cai</name>
</gene>
<reference key="1">
    <citation type="journal article" date="1993" name="Infect. Immun.">
        <title>Cloning and expression of a high-molecular-mass major antigen of Helicobacter pylori: evidence of linkage to cytotoxin production.</title>
        <authorList>
            <person name="Tummuru M.K.R."/>
            <person name="Cover T.L."/>
            <person name="Blaser M.J."/>
        </authorList>
    </citation>
    <scope>NUCLEOTIDE SEQUENCE [GENOMIC DNA]</scope>
    <source>
        <strain>ATCC 53726 / 84-183</strain>
    </source>
</reference>